<feature type="chain" id="PRO_0000116213" description="Tegument protein UL51 homolog">
    <location>
        <begin position="1"/>
        <end position="218"/>
    </location>
</feature>
<feature type="region of interest" description="Disordered" evidence="2">
    <location>
        <begin position="199"/>
        <end position="218"/>
    </location>
</feature>
<feature type="lipid moiety-binding region" description="S-palmitoyl cysteine; by host" evidence="1">
    <location>
        <position position="11"/>
    </location>
</feature>
<feature type="helix" evidence="8">
    <location>
        <begin position="53"/>
        <end position="89"/>
    </location>
</feature>
<feature type="helix" evidence="8">
    <location>
        <begin position="96"/>
        <end position="127"/>
    </location>
</feature>
<gene>
    <name type="ORF">BSRF1</name>
</gene>
<accession>P0CK49</accession>
<accession>P03194</accession>
<accession>Q777F4</accession>
<reference key="1">
    <citation type="journal article" date="1984" name="Nature">
        <title>DNA sequence and expression of the B95-8 Epstein-Barr virus genome.</title>
        <authorList>
            <person name="Baer R."/>
            <person name="Bankier A.T."/>
            <person name="Biggin M.D."/>
            <person name="Deininger P.L."/>
            <person name="Farrell P.J."/>
            <person name="Gibson T.J."/>
            <person name="Hatfull G."/>
            <person name="Hudson G.S."/>
            <person name="Satchwell S.C."/>
            <person name="Seguin C."/>
            <person name="Tuffnell P.S."/>
            <person name="Barrell B.G."/>
        </authorList>
    </citation>
    <scope>NUCLEOTIDE SEQUENCE [LARGE SCALE GENOMIC DNA]</scope>
</reference>
<reference key="2">
    <citation type="journal article" date="2003" name="Virology">
        <title>Updated Epstein-Barr virus (EBV) DNA sequence and analysis of a promoter for the BART (CST, BARF0) RNAs of EBV.</title>
        <authorList>
            <person name="de Jesus O."/>
            <person name="Smith P.R."/>
            <person name="Spender L.C."/>
            <person name="Elgueta Karstegl C."/>
            <person name="Niller H.H."/>
            <person name="Huang D."/>
            <person name="Farrell P.J."/>
        </authorList>
    </citation>
    <scope>GENOME REANNOTATION</scope>
</reference>
<reference key="3">
    <citation type="journal article" date="2004" name="Proc. Natl. Acad. Sci. U.S.A.">
        <title>Proteins of purified Epstein-Barr virus.</title>
        <authorList>
            <person name="Johannsen E."/>
            <person name="Luftig M."/>
            <person name="Chase M.R."/>
            <person name="Weicksel S."/>
            <person name="Cahir-McFarland E."/>
            <person name="Illanes D."/>
            <person name="Sarracino D."/>
            <person name="Kieff E."/>
        </authorList>
    </citation>
    <scope>IDENTIFICATION</scope>
    <scope>SUBCELLULAR LOCATION</scope>
</reference>
<reference key="4">
    <citation type="journal article" date="2019" name="Viruses">
        <title>Initial Characterization of the Epstein-Barr Virus BSRF1 Gene Product.</title>
        <authorList>
            <person name="Yanagi Y."/>
            <person name="Masud H.M.A.A."/>
            <person name="Watanabe T."/>
            <person name="Sato Y."/>
            <person name="Goshima F."/>
            <person name="Kimura H."/>
            <person name="Murata T."/>
        </authorList>
    </citation>
    <scope>SUBCELLULAR LOCATION</scope>
    <scope>INTERACTION WITH BBRF2</scope>
    <scope>INTERACTION WITH BGLF3.5</scope>
    <scope>INTERACTION WITH BALF1</scope>
</reference>
<reference key="5">
    <citation type="journal article" date="2020" name="Nat. Commun.">
        <title>Structure of Epstein-Barr virus tegument protein complex BBRF2-BSRF1 reveals its potential role in viral envelopment.</title>
        <authorList>
            <person name="He H.P."/>
            <person name="Luo M."/>
            <person name="Cao Y.L."/>
            <person name="Lin Y.X."/>
            <person name="Zhang H."/>
            <person name="Zhang X."/>
            <person name="Ou J.Y."/>
            <person name="Yu B."/>
            <person name="Chen X."/>
            <person name="Xu M."/>
            <person name="Feng L."/>
            <person name="Zeng M.S."/>
            <person name="Zeng Y.X."/>
            <person name="Gao S."/>
        </authorList>
    </citation>
    <scope>X-RAY CRYSTALLOGRAPHY (3.09 ANGSTROMS) OF 34-159</scope>
    <scope>INTERACTION WITH BBRF2</scope>
    <scope>FUNCTION</scope>
    <scope>SUBCELLULAR LOCATION</scope>
    <scope>INTERACTION WITH GLYCOPROTEIN GB</scope>
    <scope>INTERACTION WITH GLYCOPROTEIN GH/GL</scope>
</reference>
<dbReference type="EMBL" id="V01555">
    <property type="protein sequence ID" value="CAA24849.1"/>
    <property type="molecule type" value="Genomic_DNA"/>
</dbReference>
<dbReference type="EMBL" id="AJ507799">
    <property type="protein sequence ID" value="CAD53413.1"/>
    <property type="molecule type" value="Genomic_DNA"/>
</dbReference>
<dbReference type="PIR" id="E43041">
    <property type="entry name" value="QQBE16"/>
</dbReference>
<dbReference type="RefSeq" id="YP_401663.1">
    <property type="nucleotide sequence ID" value="NC_007605.1"/>
</dbReference>
<dbReference type="PDB" id="6LQO">
    <property type="method" value="X-ray"/>
    <property type="resolution" value="3.09 A"/>
    <property type="chains" value="H/I/J/K/L/M=34-159"/>
</dbReference>
<dbReference type="PDBsum" id="6LQO"/>
<dbReference type="SMR" id="P0CK49"/>
<dbReference type="IntAct" id="P0CK49">
    <property type="interactions" value="90"/>
</dbReference>
<dbReference type="MINT" id="P0CK49"/>
<dbReference type="DNASU" id="3783731"/>
<dbReference type="GeneID" id="3783731"/>
<dbReference type="KEGG" id="vg:3783731"/>
<dbReference type="Proteomes" id="UP000153037">
    <property type="component" value="Segment"/>
</dbReference>
<dbReference type="GO" id="GO:0044177">
    <property type="term" value="C:host cell Golgi apparatus"/>
    <property type="evidence" value="ECO:0007669"/>
    <property type="project" value="UniProtKB-SubCell"/>
</dbReference>
<dbReference type="GO" id="GO:0044423">
    <property type="term" value="C:virion component"/>
    <property type="evidence" value="ECO:0007669"/>
    <property type="project" value="UniProtKB-KW"/>
</dbReference>
<dbReference type="InterPro" id="IPR007619">
    <property type="entry name" value="Herpes_U44"/>
</dbReference>
<dbReference type="Pfam" id="PF04533">
    <property type="entry name" value="Herpes_U44"/>
    <property type="match status" value="1"/>
</dbReference>
<organismHost>
    <name type="scientific">Homo sapiens</name>
    <name type="common">Human</name>
    <dbReference type="NCBI Taxonomy" id="9606"/>
</organismHost>
<protein>
    <recommendedName>
        <fullName>Tegument protein UL51 homolog</fullName>
    </recommendedName>
</protein>
<name>TEG7_EBVB9</name>
<keyword id="KW-0002">3D-structure</keyword>
<keyword id="KW-1035">Host cytoplasm</keyword>
<keyword id="KW-1040">Host Golgi apparatus</keyword>
<keyword id="KW-0449">Lipoprotein</keyword>
<keyword id="KW-0564">Palmitate</keyword>
<keyword id="KW-0597">Phosphoprotein</keyword>
<keyword id="KW-1185">Reference proteome</keyword>
<keyword id="KW-0946">Virion</keyword>
<proteinExistence type="evidence at protein level"/>
<evidence type="ECO:0000250" key="1">
    <source>
        <dbReference type="UniProtKB" id="P10235"/>
    </source>
</evidence>
<evidence type="ECO:0000256" key="2">
    <source>
        <dbReference type="SAM" id="MobiDB-lite"/>
    </source>
</evidence>
<evidence type="ECO:0000269" key="3">
    <source>
    </source>
</evidence>
<evidence type="ECO:0000269" key="4">
    <source>
    </source>
</evidence>
<evidence type="ECO:0000269" key="5">
    <source>
    </source>
</evidence>
<evidence type="ECO:0000305" key="6"/>
<evidence type="ECO:0000305" key="7">
    <source>
    </source>
</evidence>
<evidence type="ECO:0007829" key="8">
    <source>
        <dbReference type="PDB" id="6LQO"/>
    </source>
</evidence>
<comment type="function">
    <text evidence="7">Plays several roles during the time course of infection, including egress of virus particles from the perinuclear space and secondary envelopment of cytoplasmic capsids that bud into specific trans-Golgi network (TGN)-derived membranes.</text>
</comment>
<comment type="subunit">
    <text evidence="1 4 5">Homodimer (By similarity). Interacts with BBRF2; the BBRF2-BSRF1 complexes oligomerize which might play a role in tethering the viral nucleocapsids to the host Golgi membrane during secondary envelopment (PubMed:30901892). Interacts with BGLF3.5 (PubMed:30901892). Interacts with BALF1 (PubMed:30901892). Interacts with glycoprotein gB. Interacts with glycoprotein heterodimer gH/gL (PubMed:33106493).</text>
</comment>
<comment type="interaction">
    <interactant intactId="EBI-2621334">
        <id>P0CK49</id>
    </interactant>
    <interactant intactId="EBI-2621338">
        <id>Q3KSR9</id>
        <label>BBRF1</label>
    </interactant>
    <organismsDiffer>true</organismsDiffer>
    <experiments>2</experiments>
</comment>
<comment type="subcellular location">
    <subcellularLocation>
        <location evidence="4 5">Host cytoplasm</location>
    </subcellularLocation>
    <subcellularLocation>
        <location evidence="3 4">Virion</location>
    </subcellularLocation>
    <subcellularLocation>
        <location evidence="5">Host Golgi apparatus</location>
    </subcellularLocation>
    <text evidence="3">Probably part of the virion tugument.</text>
</comment>
<comment type="PTM">
    <text evidence="1">Phosphorylated.</text>
</comment>
<comment type="PTM">
    <text evidence="1">Palmitoylation is necessary for Golgi localization.</text>
</comment>
<comment type="similarity">
    <text evidence="6">Belongs to the herpesviridae UL51 family.</text>
</comment>
<sequence length="218" mass="23861">MAFYLPDWSCCGLWLFGRPRNRYSQLPEEPETFECPDRWRAEIDLGLPPGVQVGDLLRNEQTMGSLRQVYLLAVQANSITDHLKRFDAVRVPESCRGVVEAQVAKLEAVRSVIWNTMISLAVSGIEMDENGLKALLDKQAGDSLALMEMEKVATALKMDETGAWAQEISAVVSSVTAPSASAPFINSAFEPEVPTPVLAPPPVVRQPEHSGPTELALT</sequence>
<organism>
    <name type="scientific">Epstein-Barr virus (strain B95-8)</name>
    <name type="common">HHV-4</name>
    <name type="synonym">Human herpesvirus 4</name>
    <dbReference type="NCBI Taxonomy" id="10377"/>
    <lineage>
        <taxon>Viruses</taxon>
        <taxon>Duplodnaviria</taxon>
        <taxon>Heunggongvirae</taxon>
        <taxon>Peploviricota</taxon>
        <taxon>Herviviricetes</taxon>
        <taxon>Herpesvirales</taxon>
        <taxon>Orthoherpesviridae</taxon>
        <taxon>Gammaherpesvirinae</taxon>
        <taxon>Lymphocryptovirus</taxon>
        <taxon>Lymphocryptovirus humangamma4</taxon>
        <taxon>Epstein-Barr virus (strain GD1)</taxon>
    </lineage>
</organism>